<accession>Q4WVQ7</accession>
<organism>
    <name type="scientific">Aspergillus fumigatus (strain ATCC MYA-4609 / CBS 101355 / FGSC A1100 / Af293)</name>
    <name type="common">Neosartorya fumigata</name>
    <dbReference type="NCBI Taxonomy" id="330879"/>
    <lineage>
        <taxon>Eukaryota</taxon>
        <taxon>Fungi</taxon>
        <taxon>Dikarya</taxon>
        <taxon>Ascomycota</taxon>
        <taxon>Pezizomycotina</taxon>
        <taxon>Eurotiomycetes</taxon>
        <taxon>Eurotiomycetidae</taxon>
        <taxon>Eurotiales</taxon>
        <taxon>Aspergillaceae</taxon>
        <taxon>Aspergillus</taxon>
        <taxon>Aspergillus subgen. Fumigati</taxon>
    </lineage>
</organism>
<gene>
    <name evidence="5" type="primary">atfB</name>
    <name type="ORF">AFUA_5G12960</name>
</gene>
<comment type="function">
    <text evidence="1 4">Transcription factor that acts as a key player in the regulatory circuit that integrates secondary metabolism and cellular response to oxidative stress (By similarity). Regulates the genes involved in development, as well as osmotic, oxidative, and cell wall stresses (PubMed:27706915). Participates in the caspofungin paradoxical effect (CPE), where fungi grow beyond the minimum inhibitory concentration of caspofungin (PubMed:27706915). Plays a role in virulence (PubMed:27706915).</text>
</comment>
<comment type="subcellular location">
    <subcellularLocation>
        <location evidence="2">Nucleus</location>
    </subcellularLocation>
</comment>
<comment type="induction">
    <text evidence="4">Expression is induced in during osmotic stress and repressed in the absence of the mitogen-activated protein kinase sakA (PubMed:27706915). Expression is also highly induced at low and high caspofungin concentrations (PubMed:27706915).</text>
</comment>
<comment type="disruption phenotype">
    <text evidence="4">Increases sensitivity to osmotic and oxidative stresses, but also to cell wall-damaging agents such as Congo red or iprodione (PubMed:27706915). Shows increased resistance to low caspofungin concentrations, but is more sensitive to higher caspofungin concentrations (PubMed:27706915). Leads to attenuated virulence (PubMed:27706915).</text>
</comment>
<comment type="similarity">
    <text evidence="6">Belongs to the bZIP family. ATF subfamily.</text>
</comment>
<name>ATFB_ASPFU</name>
<feature type="chain" id="PRO_0000444006" description="Basic leucine zipper (bZIP) transcription factor atfB">
    <location>
        <begin position="1"/>
        <end position="328"/>
    </location>
</feature>
<feature type="domain" description="bZIP" evidence="2">
    <location>
        <begin position="163"/>
        <end position="226"/>
    </location>
</feature>
<feature type="region of interest" description="Disordered" evidence="3">
    <location>
        <begin position="1"/>
        <end position="39"/>
    </location>
</feature>
<feature type="region of interest" description="Basic motif" evidence="2">
    <location>
        <begin position="163"/>
        <end position="202"/>
    </location>
</feature>
<feature type="region of interest" description="Leucine-zipper" evidence="2">
    <location>
        <begin position="205"/>
        <end position="219"/>
    </location>
</feature>
<feature type="region of interest" description="Disordered" evidence="3">
    <location>
        <begin position="250"/>
        <end position="313"/>
    </location>
</feature>
<feature type="compositionally biased region" description="Pro residues" evidence="3">
    <location>
        <begin position="22"/>
        <end position="31"/>
    </location>
</feature>
<feature type="compositionally biased region" description="Polar residues" evidence="3">
    <location>
        <begin position="262"/>
        <end position="277"/>
    </location>
</feature>
<feature type="compositionally biased region" description="Basic and acidic residues" evidence="3">
    <location>
        <begin position="283"/>
        <end position="305"/>
    </location>
</feature>
<protein>
    <recommendedName>
        <fullName evidence="5">Basic leucine zipper (bZIP) transcription factor atfB</fullName>
    </recommendedName>
</protein>
<proteinExistence type="evidence at transcript level"/>
<keyword id="KW-0238">DNA-binding</keyword>
<keyword id="KW-0539">Nucleus</keyword>
<keyword id="KW-1185">Reference proteome</keyword>
<keyword id="KW-0346">Stress response</keyword>
<keyword id="KW-0804">Transcription</keyword>
<keyword id="KW-0805">Transcription regulation</keyword>
<evidence type="ECO:0000250" key="1">
    <source>
        <dbReference type="UniProtKB" id="A0A0F0IP79"/>
    </source>
</evidence>
<evidence type="ECO:0000255" key="2">
    <source>
        <dbReference type="PROSITE-ProRule" id="PRU00978"/>
    </source>
</evidence>
<evidence type="ECO:0000256" key="3">
    <source>
        <dbReference type="SAM" id="MobiDB-lite"/>
    </source>
</evidence>
<evidence type="ECO:0000269" key="4">
    <source>
    </source>
</evidence>
<evidence type="ECO:0000303" key="5">
    <source>
    </source>
</evidence>
<evidence type="ECO:0000305" key="6"/>
<sequence>MLPEQSAFGRSAMPGSDAVNPGPSPFAPPPNSFSGDFLGLSLPDEEHLWGMSPLSSSMPSWNGKNEQMFSNPNLERDLKHSHVRNGQPTPPPYGDNKTHTVGDLYSLSQCQFSNGAQNFQTHNDRRSFCEQSAINSNGGSSKRRKVRDAKMTQAEYNEQQQEKAKREKFLERNRLAASKCRQKKKEHTQLLESRYREQSDKKEQLVSEIARLRSEILGLKNEVLKHAQCGDEPIKLHLAQMVKKITYNDTTAPDLTDVPDAASSSEGPMTPRPQQALSFGFDDPLHLEPSRADGSTDHSVRRDSEASVLTENSYAFSTDESFDDLINV</sequence>
<reference key="1">
    <citation type="journal article" date="2005" name="Nature">
        <title>Genomic sequence of the pathogenic and allergenic filamentous fungus Aspergillus fumigatus.</title>
        <authorList>
            <person name="Nierman W.C."/>
            <person name="Pain A."/>
            <person name="Anderson M.J."/>
            <person name="Wortman J.R."/>
            <person name="Kim H.S."/>
            <person name="Arroyo J."/>
            <person name="Berriman M."/>
            <person name="Abe K."/>
            <person name="Archer D.B."/>
            <person name="Bermejo C."/>
            <person name="Bennett J.W."/>
            <person name="Bowyer P."/>
            <person name="Chen D."/>
            <person name="Collins M."/>
            <person name="Coulsen R."/>
            <person name="Davies R."/>
            <person name="Dyer P.S."/>
            <person name="Farman M.L."/>
            <person name="Fedorova N."/>
            <person name="Fedorova N.D."/>
            <person name="Feldblyum T.V."/>
            <person name="Fischer R."/>
            <person name="Fosker N."/>
            <person name="Fraser A."/>
            <person name="Garcia J.L."/>
            <person name="Garcia M.J."/>
            <person name="Goble A."/>
            <person name="Goldman G.H."/>
            <person name="Gomi K."/>
            <person name="Griffith-Jones S."/>
            <person name="Gwilliam R."/>
            <person name="Haas B.J."/>
            <person name="Haas H."/>
            <person name="Harris D.E."/>
            <person name="Horiuchi H."/>
            <person name="Huang J."/>
            <person name="Humphray S."/>
            <person name="Jimenez J."/>
            <person name="Keller N."/>
            <person name="Khouri H."/>
            <person name="Kitamoto K."/>
            <person name="Kobayashi T."/>
            <person name="Konzack S."/>
            <person name="Kulkarni R."/>
            <person name="Kumagai T."/>
            <person name="Lafton A."/>
            <person name="Latge J.-P."/>
            <person name="Li W."/>
            <person name="Lord A."/>
            <person name="Lu C."/>
            <person name="Majoros W.H."/>
            <person name="May G.S."/>
            <person name="Miller B.L."/>
            <person name="Mohamoud Y."/>
            <person name="Molina M."/>
            <person name="Monod M."/>
            <person name="Mouyna I."/>
            <person name="Mulligan S."/>
            <person name="Murphy L.D."/>
            <person name="O'Neil S."/>
            <person name="Paulsen I."/>
            <person name="Penalva M.A."/>
            <person name="Pertea M."/>
            <person name="Price C."/>
            <person name="Pritchard B.L."/>
            <person name="Quail M.A."/>
            <person name="Rabbinowitsch E."/>
            <person name="Rawlins N."/>
            <person name="Rajandream M.A."/>
            <person name="Reichard U."/>
            <person name="Renauld H."/>
            <person name="Robson G.D."/>
            <person name="Rodriguez de Cordoba S."/>
            <person name="Rodriguez-Pena J.M."/>
            <person name="Ronning C.M."/>
            <person name="Rutter S."/>
            <person name="Salzberg S.L."/>
            <person name="Sanchez M."/>
            <person name="Sanchez-Ferrero J.C."/>
            <person name="Saunders D."/>
            <person name="Seeger K."/>
            <person name="Squares R."/>
            <person name="Squares S."/>
            <person name="Takeuchi M."/>
            <person name="Tekaia F."/>
            <person name="Turner G."/>
            <person name="Vazquez de Aldana C.R."/>
            <person name="Weidman J."/>
            <person name="White O."/>
            <person name="Woodward J.R."/>
            <person name="Yu J.-H."/>
            <person name="Fraser C.M."/>
            <person name="Galagan J.E."/>
            <person name="Asai K."/>
            <person name="Machida M."/>
            <person name="Hall N."/>
            <person name="Barrell B.G."/>
            <person name="Denning D.W."/>
        </authorList>
    </citation>
    <scope>NUCLEOTIDE SEQUENCE [LARGE SCALE GENOMIC DNA]</scope>
    <source>
        <strain>ATCC MYA-4609 / CBS 101355 / FGSC A1100 / Af293</strain>
    </source>
</reference>
<reference key="2">
    <citation type="journal article" date="2017" name="Cell. Microbiol.">
        <title>Genome-wide transcriptome analysis of Aspergillus fumigatus exposed to osmotic stress reveals regulators of osmotic and cell wall stresses that are SakA(HOG1) and MpkC dependent.</title>
        <authorList>
            <person name="Pereira Silva L."/>
            <person name="Alves de Castro P."/>
            <person name="Dos Reis T.F."/>
            <person name="Paziani M.H."/>
            <person name="Von Zeska Kress M.R."/>
            <person name="Riano-Pachon D.M."/>
            <person name="Hagiwara D."/>
            <person name="Ries L.N."/>
            <person name="Brown N.A."/>
            <person name="Goldman G.H."/>
        </authorList>
    </citation>
    <scope>FUNCTION</scope>
    <scope>INDUCTION</scope>
    <scope>DISRUPTION PHENOTYPE</scope>
</reference>
<dbReference type="EMBL" id="AAHF01000003">
    <property type="protein sequence ID" value="EAL91319.1"/>
    <property type="molecule type" value="Genomic_DNA"/>
</dbReference>
<dbReference type="RefSeq" id="XP_753357.1">
    <property type="nucleotide sequence ID" value="XM_748264.1"/>
</dbReference>
<dbReference type="SMR" id="Q4WVQ7"/>
<dbReference type="STRING" id="330879.Q4WVQ7"/>
<dbReference type="EnsemblFungi" id="EAL91319">
    <property type="protein sequence ID" value="EAL91319"/>
    <property type="gene ID" value="AFUA_5G12960"/>
</dbReference>
<dbReference type="GeneID" id="3510880"/>
<dbReference type="KEGG" id="afm:AFUA_5G12960"/>
<dbReference type="VEuPathDB" id="FungiDB:Afu5g12960"/>
<dbReference type="eggNOG" id="KOG1414">
    <property type="taxonomic scope" value="Eukaryota"/>
</dbReference>
<dbReference type="HOGENOM" id="CLU_888511_0_0_1"/>
<dbReference type="InParanoid" id="Q4WVQ7"/>
<dbReference type="OMA" id="KHAQCGD"/>
<dbReference type="OrthoDB" id="295274at2759"/>
<dbReference type="PHI-base" id="PHI:6909"/>
<dbReference type="Proteomes" id="UP000002530">
    <property type="component" value="Chromosome 5"/>
</dbReference>
<dbReference type="GO" id="GO:0005634">
    <property type="term" value="C:nucleus"/>
    <property type="evidence" value="ECO:0007669"/>
    <property type="project" value="UniProtKB-SubCell"/>
</dbReference>
<dbReference type="GO" id="GO:0000981">
    <property type="term" value="F:DNA-binding transcription factor activity, RNA polymerase II-specific"/>
    <property type="evidence" value="ECO:0000318"/>
    <property type="project" value="GO_Central"/>
</dbReference>
<dbReference type="GO" id="GO:0000978">
    <property type="term" value="F:RNA polymerase II cis-regulatory region sequence-specific DNA binding"/>
    <property type="evidence" value="ECO:0000318"/>
    <property type="project" value="GO_Central"/>
</dbReference>
<dbReference type="GO" id="GO:0006357">
    <property type="term" value="P:regulation of transcription by RNA polymerase II"/>
    <property type="evidence" value="ECO:0000318"/>
    <property type="project" value="GO_Central"/>
</dbReference>
<dbReference type="CDD" id="cd14687">
    <property type="entry name" value="bZIP_ATF2"/>
    <property type="match status" value="1"/>
</dbReference>
<dbReference type="Gene3D" id="1.20.5.170">
    <property type="match status" value="1"/>
</dbReference>
<dbReference type="InterPro" id="IPR004827">
    <property type="entry name" value="bZIP"/>
</dbReference>
<dbReference type="InterPro" id="IPR046347">
    <property type="entry name" value="bZIP_sf"/>
</dbReference>
<dbReference type="InterPro" id="IPR051027">
    <property type="entry name" value="bZIP_transcription_factors"/>
</dbReference>
<dbReference type="PANTHER" id="PTHR19304">
    <property type="entry name" value="CYCLIC-AMP RESPONSE ELEMENT BINDING PROTEIN"/>
    <property type="match status" value="1"/>
</dbReference>
<dbReference type="Pfam" id="PF00170">
    <property type="entry name" value="bZIP_1"/>
    <property type="match status" value="1"/>
</dbReference>
<dbReference type="SMART" id="SM00338">
    <property type="entry name" value="BRLZ"/>
    <property type="match status" value="1"/>
</dbReference>
<dbReference type="SUPFAM" id="SSF57959">
    <property type="entry name" value="Leucine zipper domain"/>
    <property type="match status" value="1"/>
</dbReference>
<dbReference type="PROSITE" id="PS50217">
    <property type="entry name" value="BZIP"/>
    <property type="match status" value="1"/>
</dbReference>
<dbReference type="PROSITE" id="PS00036">
    <property type="entry name" value="BZIP_BASIC"/>
    <property type="match status" value="1"/>
</dbReference>